<sequence length="802" mass="89070">MRYPSLARLPRRALSGLARAPVRLQSQNFLSQRCASTAALRSASAVAPACQSALHRQFQQRRYASATASAVLEAAASSPDNLTQEAIIDNLDPVEAERLSRVRNIGIAAHIDSGKTTCTERVLFYTGRIKAIHEVRGGDKVGAKMDSMDLEREKGITIQSAATFCDWVKKDKEGKEHKYHINLIDTPGHIDFTIEVERALRVLDGAVMILCAVSGVQSQTMTVDRQMRRYNVPRISFINKMDRMGANPFKAIDQINTKLKIPAAAVQVPIGAEDEFEGVVDLLRMKAIYNVGPSGEELRETDEIPEKVKAVAEERRNMLIETLADVDDEIAELFLSETEPTEQQLRDAIRRATIGLKFTPVFMGSALANKSVQPMLDGVIDYLPNPSEVQNLALDKKRDEASVKLVPYNSLPLVGLAFKLEESNFGQLTYIRVYQGTLRKGANVFNARNDKKVKIPRIVRMHSNEMEEVSEIGAGEICAVFGVDCASGDTFTDGQLGYTMSSMFVPEPVISLSIKPKNNKDAAKFSKAMARFQREDPTFRVTFDAESEQTLISGMGELHLDIYIERMRREYNVDCETGPPQVAYRETIGNHVEFDHLLKKQSGGPGDYARVVGYMEPTEKLEENVFEEQIVGGSISEKFLFACEKGFHLACEKGPLIGHKVLGTKMLINDGATHMTDSSEMSFKNATQQAFRKAFMESNPSVLEPMMKTVVTAPAEFQGDVIALLNKRNATINDSDVGVDEVTVYADCSLNGMFGFSSHLRAATQGKGEYTMEFSHYEKATPQLQKELIAKYQKAQADRHKK</sequence>
<proteinExistence type="inferred from homology"/>
<protein>
    <recommendedName>
        <fullName evidence="1">Elongation factor G, mitochondrial</fullName>
        <shortName evidence="1">EF-Gmt</shortName>
    </recommendedName>
    <alternativeName>
        <fullName evidence="1">Elongation factor G 1, mitochondrial</fullName>
        <shortName evidence="1">mEF-G 1</shortName>
    </alternativeName>
    <alternativeName>
        <fullName evidence="1">Elongation factor G1</fullName>
    </alternativeName>
</protein>
<reference key="1">
    <citation type="submission" date="2005-09" db="EMBL/GenBank/DDBJ databases">
        <title>Annotation of the Aspergillus terreus NIH2624 genome.</title>
        <authorList>
            <person name="Birren B.W."/>
            <person name="Lander E.S."/>
            <person name="Galagan J.E."/>
            <person name="Nusbaum C."/>
            <person name="Devon K."/>
            <person name="Henn M."/>
            <person name="Ma L.-J."/>
            <person name="Jaffe D.B."/>
            <person name="Butler J."/>
            <person name="Alvarez P."/>
            <person name="Gnerre S."/>
            <person name="Grabherr M."/>
            <person name="Kleber M."/>
            <person name="Mauceli E.W."/>
            <person name="Brockman W."/>
            <person name="Rounsley S."/>
            <person name="Young S.K."/>
            <person name="LaButti K."/>
            <person name="Pushparaj V."/>
            <person name="DeCaprio D."/>
            <person name="Crawford M."/>
            <person name="Koehrsen M."/>
            <person name="Engels R."/>
            <person name="Montgomery P."/>
            <person name="Pearson M."/>
            <person name="Howarth C."/>
            <person name="Larson L."/>
            <person name="Luoma S."/>
            <person name="White J."/>
            <person name="Alvarado L."/>
            <person name="Kodira C.D."/>
            <person name="Zeng Q."/>
            <person name="Oleary S."/>
            <person name="Yandava C."/>
            <person name="Denning D.W."/>
            <person name="Nierman W.C."/>
            <person name="Milne T."/>
            <person name="Madden K."/>
        </authorList>
    </citation>
    <scope>NUCLEOTIDE SEQUENCE [LARGE SCALE GENOMIC DNA]</scope>
    <source>
        <strain>NIH 2624 / FGSC A1156</strain>
    </source>
</reference>
<organism>
    <name type="scientific">Aspergillus terreus (strain NIH 2624 / FGSC A1156)</name>
    <dbReference type="NCBI Taxonomy" id="341663"/>
    <lineage>
        <taxon>Eukaryota</taxon>
        <taxon>Fungi</taxon>
        <taxon>Dikarya</taxon>
        <taxon>Ascomycota</taxon>
        <taxon>Pezizomycotina</taxon>
        <taxon>Eurotiomycetes</taxon>
        <taxon>Eurotiomycetidae</taxon>
        <taxon>Eurotiales</taxon>
        <taxon>Aspergillaceae</taxon>
        <taxon>Aspergillus</taxon>
        <taxon>Aspergillus subgen. Circumdati</taxon>
    </lineage>
</organism>
<name>EFGM_ASPTN</name>
<gene>
    <name type="primary">mef1</name>
    <name type="ORF">ATEG_05391</name>
</gene>
<feature type="transit peptide" description="Mitochondrion" evidence="1">
    <location>
        <begin position="1"/>
        <end position="24"/>
    </location>
</feature>
<feature type="chain" id="PRO_0000385562" description="Elongation factor G, mitochondrial">
    <location>
        <begin position="25"/>
        <end position="802"/>
    </location>
</feature>
<feature type="domain" description="tr-type G">
    <location>
        <begin position="100"/>
        <end position="387"/>
    </location>
</feature>
<feature type="binding site" evidence="1">
    <location>
        <begin position="109"/>
        <end position="116"/>
    </location>
    <ligand>
        <name>GTP</name>
        <dbReference type="ChEBI" id="CHEBI:37565"/>
    </ligand>
</feature>
<feature type="binding site" evidence="1">
    <location>
        <begin position="185"/>
        <end position="189"/>
    </location>
    <ligand>
        <name>GTP</name>
        <dbReference type="ChEBI" id="CHEBI:37565"/>
    </ligand>
</feature>
<feature type="binding site" evidence="1">
    <location>
        <begin position="239"/>
        <end position="242"/>
    </location>
    <ligand>
        <name>GTP</name>
        <dbReference type="ChEBI" id="CHEBI:37565"/>
    </ligand>
</feature>
<evidence type="ECO:0000255" key="1">
    <source>
        <dbReference type="HAMAP-Rule" id="MF_03061"/>
    </source>
</evidence>
<evidence type="ECO:0000305" key="2"/>
<keyword id="KW-0251">Elongation factor</keyword>
<keyword id="KW-0342">GTP-binding</keyword>
<keyword id="KW-0496">Mitochondrion</keyword>
<keyword id="KW-0547">Nucleotide-binding</keyword>
<keyword id="KW-0648">Protein biosynthesis</keyword>
<keyword id="KW-1185">Reference proteome</keyword>
<keyword id="KW-0809">Transit peptide</keyword>
<comment type="function">
    <text evidence="1">Mitochondrial GTPase that catalyzes the GTP-dependent ribosomal translocation step during translation elongation. During this step, the ribosome changes from the pre-translocational (PRE) to the post-translocational (POST) state as the newly formed A-site-bound peptidyl-tRNA and P-site-bound deacylated tRNA move to the P and E sites, respectively. Catalyzes the coordinated movement of the two tRNA molecules, the mRNA and conformational changes in the ribosome.</text>
</comment>
<comment type="pathway">
    <text evidence="1">Protein biosynthesis; polypeptide chain elongation.</text>
</comment>
<comment type="subcellular location">
    <subcellularLocation>
        <location evidence="1">Mitochondrion</location>
    </subcellularLocation>
</comment>
<comment type="similarity">
    <text evidence="2">Belongs to the TRAFAC class translation factor GTPase superfamily. Classic translation factor GTPase family. EF-G/EF-2 subfamily.</text>
</comment>
<accession>Q0CLP3</accession>
<dbReference type="EMBL" id="CH476600">
    <property type="protein sequence ID" value="EAU34460.1"/>
    <property type="molecule type" value="Genomic_DNA"/>
</dbReference>
<dbReference type="RefSeq" id="XP_001214569.1">
    <property type="nucleotide sequence ID" value="XM_001214569.1"/>
</dbReference>
<dbReference type="SMR" id="Q0CLP3"/>
<dbReference type="STRING" id="341663.Q0CLP3"/>
<dbReference type="EnsemblFungi" id="EAU34460">
    <property type="protein sequence ID" value="EAU34460"/>
    <property type="gene ID" value="ATEG_05391"/>
</dbReference>
<dbReference type="GeneID" id="4320643"/>
<dbReference type="VEuPathDB" id="FungiDB:ATEG_05391"/>
<dbReference type="eggNOG" id="KOG0465">
    <property type="taxonomic scope" value="Eukaryota"/>
</dbReference>
<dbReference type="HOGENOM" id="CLU_002794_4_1_1"/>
<dbReference type="OMA" id="GQFAKVQ"/>
<dbReference type="OrthoDB" id="198619at2759"/>
<dbReference type="UniPathway" id="UPA00345"/>
<dbReference type="Proteomes" id="UP000007963">
    <property type="component" value="Unassembled WGS sequence"/>
</dbReference>
<dbReference type="GO" id="GO:0005739">
    <property type="term" value="C:mitochondrion"/>
    <property type="evidence" value="ECO:0007669"/>
    <property type="project" value="UniProtKB-SubCell"/>
</dbReference>
<dbReference type="GO" id="GO:0005525">
    <property type="term" value="F:GTP binding"/>
    <property type="evidence" value="ECO:0007669"/>
    <property type="project" value="UniProtKB-UniRule"/>
</dbReference>
<dbReference type="GO" id="GO:0003924">
    <property type="term" value="F:GTPase activity"/>
    <property type="evidence" value="ECO:0007669"/>
    <property type="project" value="UniProtKB-UniRule"/>
</dbReference>
<dbReference type="GO" id="GO:0003746">
    <property type="term" value="F:translation elongation factor activity"/>
    <property type="evidence" value="ECO:0007669"/>
    <property type="project" value="UniProtKB-UniRule"/>
</dbReference>
<dbReference type="GO" id="GO:0070125">
    <property type="term" value="P:mitochondrial translational elongation"/>
    <property type="evidence" value="ECO:0007669"/>
    <property type="project" value="UniProtKB-UniRule"/>
</dbReference>
<dbReference type="CDD" id="cd01886">
    <property type="entry name" value="EF-G"/>
    <property type="match status" value="1"/>
</dbReference>
<dbReference type="CDD" id="cd16262">
    <property type="entry name" value="EFG_III"/>
    <property type="match status" value="1"/>
</dbReference>
<dbReference type="CDD" id="cd01434">
    <property type="entry name" value="EFG_mtEFG1_IV"/>
    <property type="match status" value="1"/>
</dbReference>
<dbReference type="CDD" id="cd04091">
    <property type="entry name" value="mtEFG1_II_like"/>
    <property type="match status" value="1"/>
</dbReference>
<dbReference type="FunFam" id="3.30.230.10:FF:000003">
    <property type="entry name" value="Elongation factor G"/>
    <property type="match status" value="1"/>
</dbReference>
<dbReference type="FunFam" id="3.30.70.870:FF:000001">
    <property type="entry name" value="Elongation factor G"/>
    <property type="match status" value="1"/>
</dbReference>
<dbReference type="FunFam" id="2.40.30.10:FF:000022">
    <property type="entry name" value="Elongation factor G, mitochondrial"/>
    <property type="match status" value="1"/>
</dbReference>
<dbReference type="FunFam" id="3.30.70.240:FF:000015">
    <property type="entry name" value="Elongation factor G, mitochondrial"/>
    <property type="match status" value="1"/>
</dbReference>
<dbReference type="FunFam" id="3.40.50.300:FF:000558">
    <property type="entry name" value="Elongation factor G, mitochondrial"/>
    <property type="match status" value="1"/>
</dbReference>
<dbReference type="Gene3D" id="3.30.230.10">
    <property type="match status" value="1"/>
</dbReference>
<dbReference type="Gene3D" id="3.30.70.240">
    <property type="match status" value="1"/>
</dbReference>
<dbReference type="Gene3D" id="3.30.70.870">
    <property type="entry name" value="Elongation Factor G (Translational Gtpase), domain 3"/>
    <property type="match status" value="1"/>
</dbReference>
<dbReference type="Gene3D" id="3.40.50.300">
    <property type="entry name" value="P-loop containing nucleotide triphosphate hydrolases"/>
    <property type="match status" value="1"/>
</dbReference>
<dbReference type="Gene3D" id="2.40.30.10">
    <property type="entry name" value="Translation factors"/>
    <property type="match status" value="1"/>
</dbReference>
<dbReference type="HAMAP" id="MF_00054_B">
    <property type="entry name" value="EF_G_EF_2_B"/>
    <property type="match status" value="1"/>
</dbReference>
<dbReference type="InterPro" id="IPR041095">
    <property type="entry name" value="EFG_II"/>
</dbReference>
<dbReference type="InterPro" id="IPR009022">
    <property type="entry name" value="EFG_III"/>
</dbReference>
<dbReference type="InterPro" id="IPR035647">
    <property type="entry name" value="EFG_III/V"/>
</dbReference>
<dbReference type="InterPro" id="IPR047872">
    <property type="entry name" value="EFG_IV"/>
</dbReference>
<dbReference type="InterPro" id="IPR000640">
    <property type="entry name" value="EFG_V-like"/>
</dbReference>
<dbReference type="InterPro" id="IPR004161">
    <property type="entry name" value="EFTu-like_2"/>
</dbReference>
<dbReference type="InterPro" id="IPR031157">
    <property type="entry name" value="G_TR_CS"/>
</dbReference>
<dbReference type="InterPro" id="IPR027417">
    <property type="entry name" value="P-loop_NTPase"/>
</dbReference>
<dbReference type="InterPro" id="IPR020568">
    <property type="entry name" value="Ribosomal_Su5_D2-typ_SF"/>
</dbReference>
<dbReference type="InterPro" id="IPR014721">
    <property type="entry name" value="Ribsml_uS5_D2-typ_fold_subgr"/>
</dbReference>
<dbReference type="InterPro" id="IPR005225">
    <property type="entry name" value="Small_GTP-bd"/>
</dbReference>
<dbReference type="InterPro" id="IPR000795">
    <property type="entry name" value="T_Tr_GTP-bd_dom"/>
</dbReference>
<dbReference type="InterPro" id="IPR009000">
    <property type="entry name" value="Transl_B-barrel_sf"/>
</dbReference>
<dbReference type="InterPro" id="IPR004540">
    <property type="entry name" value="Transl_elong_EFG/EF2"/>
</dbReference>
<dbReference type="InterPro" id="IPR005517">
    <property type="entry name" value="Transl_elong_EFG/EF2_IV"/>
</dbReference>
<dbReference type="NCBIfam" id="TIGR00484">
    <property type="entry name" value="EF-G"/>
    <property type="match status" value="1"/>
</dbReference>
<dbReference type="NCBIfam" id="NF009381">
    <property type="entry name" value="PRK12740.1-5"/>
    <property type="match status" value="1"/>
</dbReference>
<dbReference type="NCBIfam" id="TIGR00231">
    <property type="entry name" value="small_GTP"/>
    <property type="match status" value="1"/>
</dbReference>
<dbReference type="PANTHER" id="PTHR43636">
    <property type="entry name" value="ELONGATION FACTOR G, MITOCHONDRIAL"/>
    <property type="match status" value="1"/>
</dbReference>
<dbReference type="PANTHER" id="PTHR43636:SF2">
    <property type="entry name" value="ELONGATION FACTOR G, MITOCHONDRIAL"/>
    <property type="match status" value="1"/>
</dbReference>
<dbReference type="Pfam" id="PF00679">
    <property type="entry name" value="EFG_C"/>
    <property type="match status" value="1"/>
</dbReference>
<dbReference type="Pfam" id="PF14492">
    <property type="entry name" value="EFG_III"/>
    <property type="match status" value="1"/>
</dbReference>
<dbReference type="Pfam" id="PF03764">
    <property type="entry name" value="EFG_IV"/>
    <property type="match status" value="1"/>
</dbReference>
<dbReference type="Pfam" id="PF00009">
    <property type="entry name" value="GTP_EFTU"/>
    <property type="match status" value="1"/>
</dbReference>
<dbReference type="Pfam" id="PF03144">
    <property type="entry name" value="GTP_EFTU_D2"/>
    <property type="match status" value="1"/>
</dbReference>
<dbReference type="PRINTS" id="PR00315">
    <property type="entry name" value="ELONGATNFCT"/>
</dbReference>
<dbReference type="SMART" id="SM00838">
    <property type="entry name" value="EFG_C"/>
    <property type="match status" value="1"/>
</dbReference>
<dbReference type="SMART" id="SM00889">
    <property type="entry name" value="EFG_IV"/>
    <property type="match status" value="1"/>
</dbReference>
<dbReference type="SUPFAM" id="SSF54980">
    <property type="entry name" value="EF-G C-terminal domain-like"/>
    <property type="match status" value="2"/>
</dbReference>
<dbReference type="SUPFAM" id="SSF52540">
    <property type="entry name" value="P-loop containing nucleoside triphosphate hydrolases"/>
    <property type="match status" value="1"/>
</dbReference>
<dbReference type="SUPFAM" id="SSF54211">
    <property type="entry name" value="Ribosomal protein S5 domain 2-like"/>
    <property type="match status" value="1"/>
</dbReference>
<dbReference type="SUPFAM" id="SSF50447">
    <property type="entry name" value="Translation proteins"/>
    <property type="match status" value="1"/>
</dbReference>
<dbReference type="PROSITE" id="PS00301">
    <property type="entry name" value="G_TR_1"/>
    <property type="match status" value="1"/>
</dbReference>
<dbReference type="PROSITE" id="PS51722">
    <property type="entry name" value="G_TR_2"/>
    <property type="match status" value="1"/>
</dbReference>